<organism>
    <name type="scientific">Synechococcus elongatus (strain ATCC 33912 / PCC 7942 / FACHB-805)</name>
    <name type="common">Anacystis nidulans R2</name>
    <dbReference type="NCBI Taxonomy" id="1140"/>
    <lineage>
        <taxon>Bacteria</taxon>
        <taxon>Bacillati</taxon>
        <taxon>Cyanobacteriota</taxon>
        <taxon>Cyanophyceae</taxon>
        <taxon>Synechococcales</taxon>
        <taxon>Synechococcaceae</taxon>
        <taxon>Synechococcus</taxon>
    </lineage>
</organism>
<name>CMPC_SYNE7</name>
<evidence type="ECO:0000255" key="1">
    <source>
        <dbReference type="PROSITE-ProRule" id="PRU00434"/>
    </source>
</evidence>
<evidence type="ECO:0000269" key="2">
    <source>
    </source>
</evidence>
<evidence type="ECO:0000305" key="3"/>
<evidence type="ECO:0000305" key="4">
    <source>
    </source>
</evidence>
<comment type="function">
    <text evidence="4">Part of the ABC transporter complex CmpABCD involved in bicarbonate transport. Responsible for energy coupling to the transport system (Probable).</text>
</comment>
<comment type="subunit">
    <text evidence="3">The complex is composed of two ATP-binding proteins (CmpC and CmpD), a transmembrane protein (CmpB) and a solute-binding protein (CmpA).</text>
</comment>
<comment type="subcellular location">
    <subcellularLocation>
        <location evidence="3">Cell inner membrane</location>
        <topology evidence="3">Peripheral membrane protein</topology>
    </subcellularLocation>
</comment>
<comment type="induction">
    <text evidence="2">By carbon dioxide-limited conditions, probably via CmpR.</text>
</comment>
<comment type="similarity">
    <text evidence="3">Belongs to the ABC transporter superfamily. Nitrate/nitrite/cyanate uptake transporter (NitT) (TC 3.A.1.16) family.</text>
</comment>
<accession>Q55107</accession>
<accession>Q31N49</accession>
<dbReference type="EC" id="7.6.2.-"/>
<dbReference type="EMBL" id="D26358">
    <property type="protein sequence ID" value="BAA05388.1"/>
    <property type="molecule type" value="Genomic_DNA"/>
</dbReference>
<dbReference type="EMBL" id="CP000100">
    <property type="protein sequence ID" value="ABB57520.1"/>
    <property type="molecule type" value="Genomic_DNA"/>
</dbReference>
<dbReference type="RefSeq" id="WP_011244786.1">
    <property type="nucleotide sequence ID" value="NZ_JACJTX010000004.1"/>
</dbReference>
<dbReference type="SMR" id="Q55107"/>
<dbReference type="STRING" id="1140.Synpcc7942_1490"/>
<dbReference type="TCDB" id="3.A.1.16.3">
    <property type="family name" value="the atp-binding cassette (abc) superfamily"/>
</dbReference>
<dbReference type="PaxDb" id="1140-Synpcc7942_1490"/>
<dbReference type="KEGG" id="syf:Synpcc7942_1490"/>
<dbReference type="eggNOG" id="COG0715">
    <property type="taxonomic scope" value="Bacteria"/>
</dbReference>
<dbReference type="eggNOG" id="COG1116">
    <property type="taxonomic scope" value="Bacteria"/>
</dbReference>
<dbReference type="HOGENOM" id="CLU_025127_0_0_3"/>
<dbReference type="OrthoDB" id="568193at2"/>
<dbReference type="Proteomes" id="UP000889800">
    <property type="component" value="Chromosome"/>
</dbReference>
<dbReference type="GO" id="GO:0005886">
    <property type="term" value="C:plasma membrane"/>
    <property type="evidence" value="ECO:0007669"/>
    <property type="project" value="UniProtKB-SubCell"/>
</dbReference>
<dbReference type="GO" id="GO:0005524">
    <property type="term" value="F:ATP binding"/>
    <property type="evidence" value="ECO:0007669"/>
    <property type="project" value="UniProtKB-KW"/>
</dbReference>
<dbReference type="GO" id="GO:0016887">
    <property type="term" value="F:ATP hydrolysis activity"/>
    <property type="evidence" value="ECO:0007669"/>
    <property type="project" value="InterPro"/>
</dbReference>
<dbReference type="GO" id="GO:0015112">
    <property type="term" value="F:nitrate transmembrane transporter activity"/>
    <property type="evidence" value="ECO:0007669"/>
    <property type="project" value="InterPro"/>
</dbReference>
<dbReference type="GO" id="GO:0006811">
    <property type="term" value="P:monoatomic ion transport"/>
    <property type="evidence" value="ECO:0007669"/>
    <property type="project" value="UniProtKB-KW"/>
</dbReference>
<dbReference type="CDD" id="cd03293">
    <property type="entry name" value="ABC_NrtD_SsuB_transporters"/>
    <property type="match status" value="1"/>
</dbReference>
<dbReference type="CDD" id="cd13553">
    <property type="entry name" value="PBP2_NrtA_CpmA_like"/>
    <property type="match status" value="1"/>
</dbReference>
<dbReference type="Gene3D" id="3.40.50.300">
    <property type="entry name" value="P-loop containing nucleotide triphosphate hydrolases"/>
    <property type="match status" value="1"/>
</dbReference>
<dbReference type="Gene3D" id="3.40.190.10">
    <property type="entry name" value="Periplasmic binding protein-like II"/>
    <property type="match status" value="2"/>
</dbReference>
<dbReference type="InterPro" id="IPR003593">
    <property type="entry name" value="AAA+_ATPase"/>
</dbReference>
<dbReference type="InterPro" id="IPR050093">
    <property type="entry name" value="ABC_SmlMolc_Importer"/>
</dbReference>
<dbReference type="InterPro" id="IPR003439">
    <property type="entry name" value="ABC_transporter-like_ATP-bd"/>
</dbReference>
<dbReference type="InterPro" id="IPR017871">
    <property type="entry name" value="ABC_transporter-like_CS"/>
</dbReference>
<dbReference type="InterPro" id="IPR005890">
    <property type="entry name" value="NO3_transporter_ATP-bd-like"/>
</dbReference>
<dbReference type="InterPro" id="IPR044527">
    <property type="entry name" value="NrtA/CpmA_ABC-bd_dom"/>
</dbReference>
<dbReference type="InterPro" id="IPR027417">
    <property type="entry name" value="P-loop_NTPase"/>
</dbReference>
<dbReference type="NCBIfam" id="TIGR01184">
    <property type="entry name" value="ntrCD"/>
    <property type="match status" value="1"/>
</dbReference>
<dbReference type="PANTHER" id="PTHR42781:SF8">
    <property type="entry name" value="BICARBONATE TRANSPORT ATP-BINDING PROTEIN CMPC"/>
    <property type="match status" value="1"/>
</dbReference>
<dbReference type="PANTHER" id="PTHR42781">
    <property type="entry name" value="SPERMIDINE/PUTRESCINE IMPORT ATP-BINDING PROTEIN POTA"/>
    <property type="match status" value="1"/>
</dbReference>
<dbReference type="Pfam" id="PF00005">
    <property type="entry name" value="ABC_tran"/>
    <property type="match status" value="1"/>
</dbReference>
<dbReference type="Pfam" id="PF13379">
    <property type="entry name" value="NMT1_2"/>
    <property type="match status" value="1"/>
</dbReference>
<dbReference type="SMART" id="SM00382">
    <property type="entry name" value="AAA"/>
    <property type="match status" value="1"/>
</dbReference>
<dbReference type="SUPFAM" id="SSF52540">
    <property type="entry name" value="P-loop containing nucleoside triphosphate hydrolases"/>
    <property type="match status" value="1"/>
</dbReference>
<dbReference type="SUPFAM" id="SSF53850">
    <property type="entry name" value="Periplasmic binding protein-like II"/>
    <property type="match status" value="1"/>
</dbReference>
<dbReference type="PROSITE" id="PS00211">
    <property type="entry name" value="ABC_TRANSPORTER_1"/>
    <property type="match status" value="1"/>
</dbReference>
<dbReference type="PROSITE" id="PS50893">
    <property type="entry name" value="ABC_TRANSPORTER_2"/>
    <property type="match status" value="1"/>
</dbReference>
<feature type="chain" id="PRO_0000341954" description="Bicarbonate transport ATP-binding protein CmpC">
    <location>
        <begin position="1"/>
        <end position="663"/>
    </location>
</feature>
<feature type="domain" description="ABC transporter" evidence="1">
    <location>
        <begin position="5"/>
        <end position="239"/>
    </location>
</feature>
<feature type="region of interest" description="CmpA-like">
    <location>
        <begin position="281"/>
        <end position="663"/>
    </location>
</feature>
<feature type="binding site" evidence="1">
    <location>
        <begin position="42"/>
        <end position="49"/>
    </location>
    <ligand>
        <name>ATP</name>
        <dbReference type="ChEBI" id="CHEBI:30616"/>
    </ligand>
</feature>
<sequence>MSLFVAVENIEKSFPLSGGNEYLALKGIDLEIKQGEFISLIGHSGCGKSTLLNLIAGLELPTDGAVSLEGQQITAPGPDRMVVFQNYSLFPWLTVRENIALAVDEVLRDLPKEERQAIVEEHIQLVGLGHAADKPPAQLSGGMKQRVAIARGLATRPKLLLLDEPFGALDALTRGNLQEKLMQICEENHVTAVMVTHDVDEAVLLSDRIVMLTNGPGSKIGGILEVDIPRPRKRMDVVHHPSYYSLRSEIIYFLNQQKRVKKLNARKVTTVARHGLEKVNLEIGYVPLMACAPLVVAQEKAFFAKHGLDEVSLVRETSWRGIVDGLTENYLDAAQMPAGMPVWMSVGGQGGSPLPIVSSLTMSRNGNGITLSKALYDEGIQTVDDFRNLLRSTADKQHIMGIVHPASMHNLLLRYWLAANQIDPDRDVQLRTIPPAQMVADLKDGTIDGYCIGEPWNAWAAQKEIGFTIASDLEIWNGHPGKVLGVREDWANRYPNSHVALVKALLEACQYCEDPANWDELRELLSDRRYLSCPKEYIQFSQSTADDLAVPHHRFAGAGVNRPSRTEHLWMMTQLARWGDVPFPRNWVEILERVCRVGVFSTAARELGLSEVVNYQRSTPVELFDGVPFNAEDPIAYLNSLPIHRDFSVAEIALDQPRPIAAA</sequence>
<keyword id="KW-0067">ATP-binding</keyword>
<keyword id="KW-0997">Cell inner membrane</keyword>
<keyword id="KW-1003">Cell membrane</keyword>
<keyword id="KW-0406">Ion transport</keyword>
<keyword id="KW-0472">Membrane</keyword>
<keyword id="KW-0547">Nucleotide-binding</keyword>
<keyword id="KW-1185">Reference proteome</keyword>
<keyword id="KW-1278">Translocase</keyword>
<keyword id="KW-0813">Transport</keyword>
<gene>
    <name type="primary">cmpC</name>
    <name type="ordered locus">Synpcc7942_1490</name>
</gene>
<proteinExistence type="evidence at protein level"/>
<reference key="1">
    <citation type="submission" date="1993-12" db="EMBL/GenBank/DDBJ databases">
        <authorList>
            <person name="Omata T."/>
        </authorList>
    </citation>
    <scope>NUCLEOTIDE SEQUENCE [GENOMIC DNA]</scope>
</reference>
<reference key="2">
    <citation type="submission" date="2005-08" db="EMBL/GenBank/DDBJ databases">
        <title>Complete sequence of chromosome 1 of Synechococcus elongatus PCC 7942.</title>
        <authorList>
            <consortium name="US DOE Joint Genome Institute"/>
            <person name="Copeland A."/>
            <person name="Lucas S."/>
            <person name="Lapidus A."/>
            <person name="Barry K."/>
            <person name="Detter J.C."/>
            <person name="Glavina T."/>
            <person name="Hammon N."/>
            <person name="Israni S."/>
            <person name="Pitluck S."/>
            <person name="Schmutz J."/>
            <person name="Larimer F."/>
            <person name="Land M."/>
            <person name="Kyrpides N."/>
            <person name="Lykidis A."/>
            <person name="Golden S."/>
            <person name="Richardson P."/>
        </authorList>
    </citation>
    <scope>NUCLEOTIDE SEQUENCE [LARGE SCALE GENOMIC DNA]</scope>
    <source>
        <strain>ATCC 33912 / PCC 7942 / FACHB-805</strain>
    </source>
</reference>
<reference key="3">
    <citation type="journal article" date="1999" name="Proc. Natl. Acad. Sci. U.S.A.">
        <title>Identification of an ATP-binding cassette transporter involved in bicarbonate uptake in the cyanobacterium Synechococcus sp. strain PCC 7942.</title>
        <authorList>
            <person name="Omata T."/>
            <person name="Price G.D."/>
            <person name="Badger M.R."/>
            <person name="Okamura M."/>
            <person name="Gohta S."/>
            <person name="Ogawa T."/>
        </authorList>
    </citation>
    <scope>FUNCTION IN BICARBONATE TRANSPORT</scope>
    <scope>INDUCTION</scope>
</reference>
<reference key="4">
    <citation type="journal article" date="2001" name="J. Bacteriol.">
        <title>Involvement of a CbbR homolog in low CO2-induced activation of the bicarbonate transporter operon in cyanobacteria.</title>
        <authorList>
            <person name="Omata T."/>
            <person name="Gohta S."/>
            <person name="Takahashi Y."/>
            <person name="Harano Y."/>
            <person name="Maeda S."/>
        </authorList>
    </citation>
    <scope>REGULATION BY CMPR</scope>
</reference>
<protein>
    <recommendedName>
        <fullName>Bicarbonate transport ATP-binding protein CmpC</fullName>
        <ecNumber>7.6.2.-</ecNumber>
    </recommendedName>
</protein>